<sequence length="157" mass="18540">MFDVLMYLFETYIHNEAELRVDQDRLERDLTDAGFDREDIYNALLWLEKLADYQDGLAEPMQLASDPLSMRIYTVEECERLDASCRGFLLFLEQIQVLNLETREMVIERVLALDTAEFDLEDLKWVILMVLFNIPGCENAYQQMEELLFEVNEGMLH</sequence>
<evidence type="ECO:0000255" key="1">
    <source>
        <dbReference type="HAMAP-Rule" id="MF_00598"/>
    </source>
</evidence>
<gene>
    <name evidence="1" type="primary">smg</name>
    <name type="ordered locus">SPA3271</name>
</gene>
<dbReference type="EMBL" id="CP000026">
    <property type="protein sequence ID" value="AAV79087.1"/>
    <property type="molecule type" value="Genomic_DNA"/>
</dbReference>
<dbReference type="RefSeq" id="WP_000460663.1">
    <property type="nucleotide sequence ID" value="NC_006511.1"/>
</dbReference>
<dbReference type="SMR" id="Q5PIU0"/>
<dbReference type="KEGG" id="spt:SPA3271"/>
<dbReference type="HOGENOM" id="CLU_133242_0_0_6"/>
<dbReference type="Proteomes" id="UP000008185">
    <property type="component" value="Chromosome"/>
</dbReference>
<dbReference type="HAMAP" id="MF_00598">
    <property type="entry name" value="Smg"/>
    <property type="match status" value="1"/>
</dbReference>
<dbReference type="InterPro" id="IPR007456">
    <property type="entry name" value="Smg"/>
</dbReference>
<dbReference type="NCBIfam" id="NF002897">
    <property type="entry name" value="PRK03430.1"/>
    <property type="match status" value="1"/>
</dbReference>
<dbReference type="PANTHER" id="PTHR38692">
    <property type="entry name" value="PROTEIN SMG"/>
    <property type="match status" value="1"/>
</dbReference>
<dbReference type="PANTHER" id="PTHR38692:SF1">
    <property type="entry name" value="PROTEIN SMG"/>
    <property type="match status" value="1"/>
</dbReference>
<dbReference type="Pfam" id="PF04361">
    <property type="entry name" value="DUF494"/>
    <property type="match status" value="1"/>
</dbReference>
<feature type="chain" id="PRO_0000209178" description="Protein Smg">
    <location>
        <begin position="1"/>
        <end position="157"/>
    </location>
</feature>
<accession>Q5PIU0</accession>
<organism>
    <name type="scientific">Salmonella paratyphi A (strain ATCC 9150 / SARB42)</name>
    <dbReference type="NCBI Taxonomy" id="295319"/>
    <lineage>
        <taxon>Bacteria</taxon>
        <taxon>Pseudomonadati</taxon>
        <taxon>Pseudomonadota</taxon>
        <taxon>Gammaproteobacteria</taxon>
        <taxon>Enterobacterales</taxon>
        <taxon>Enterobacteriaceae</taxon>
        <taxon>Salmonella</taxon>
    </lineage>
</organism>
<comment type="similarity">
    <text evidence="1">Belongs to the Smg family.</text>
</comment>
<proteinExistence type="inferred from homology"/>
<reference key="1">
    <citation type="journal article" date="2004" name="Nat. Genet.">
        <title>Comparison of genome degradation in Paratyphi A and Typhi, human-restricted serovars of Salmonella enterica that cause typhoid.</title>
        <authorList>
            <person name="McClelland M."/>
            <person name="Sanderson K.E."/>
            <person name="Clifton S.W."/>
            <person name="Latreille P."/>
            <person name="Porwollik S."/>
            <person name="Sabo A."/>
            <person name="Meyer R."/>
            <person name="Bieri T."/>
            <person name="Ozersky P."/>
            <person name="McLellan M."/>
            <person name="Harkins C.R."/>
            <person name="Wang C."/>
            <person name="Nguyen C."/>
            <person name="Berghoff A."/>
            <person name="Elliott G."/>
            <person name="Kohlberg S."/>
            <person name="Strong C."/>
            <person name="Du F."/>
            <person name="Carter J."/>
            <person name="Kremizki C."/>
            <person name="Layman D."/>
            <person name="Leonard S."/>
            <person name="Sun H."/>
            <person name="Fulton L."/>
            <person name="Nash W."/>
            <person name="Miner T."/>
            <person name="Minx P."/>
            <person name="Delehaunty K."/>
            <person name="Fronick C."/>
            <person name="Magrini V."/>
            <person name="Nhan M."/>
            <person name="Warren W."/>
            <person name="Florea L."/>
            <person name="Spieth J."/>
            <person name="Wilson R.K."/>
        </authorList>
    </citation>
    <scope>NUCLEOTIDE SEQUENCE [LARGE SCALE GENOMIC DNA]</scope>
    <source>
        <strain>ATCC 9150 / SARB42</strain>
    </source>
</reference>
<name>SMG_SALPA</name>
<protein>
    <recommendedName>
        <fullName evidence="1">Protein Smg</fullName>
    </recommendedName>
</protein>